<reference key="1">
    <citation type="journal article" date="2013" name="G3 (Bethesda)">
        <title>Comparative genomics of a plant-pathogenic fungus, Pyrenophora tritici-repentis, reveals transduplication and the impact of repeat elements on pathogenicity and population divergence.</title>
        <authorList>
            <person name="Manning V.A."/>
            <person name="Pandelova I."/>
            <person name="Dhillon B."/>
            <person name="Wilhelm L.J."/>
            <person name="Goodwin S.B."/>
            <person name="Berlin A.M."/>
            <person name="Figueroa M."/>
            <person name="Freitag M."/>
            <person name="Hane J.K."/>
            <person name="Henrissat B."/>
            <person name="Holman W.H."/>
            <person name="Kodira C.D."/>
            <person name="Martin J."/>
            <person name="Oliver R.P."/>
            <person name="Robbertse B."/>
            <person name="Schackwitz W."/>
            <person name="Schwartz D.C."/>
            <person name="Spatafora J.W."/>
            <person name="Turgeon B.G."/>
            <person name="Yandava C."/>
            <person name="Young S."/>
            <person name="Zhou S."/>
            <person name="Zeng Q."/>
            <person name="Grigoriev I.V."/>
            <person name="Ma L.-J."/>
            <person name="Ciuffetti L.M."/>
        </authorList>
    </citation>
    <scope>NUCLEOTIDE SEQUENCE [LARGE SCALE GENOMIC DNA]</scope>
    <source>
        <strain>Pt-1C-BFP</strain>
    </source>
</reference>
<feature type="chain" id="PRO_0000409242" description="Bifunctional lycopene cyclase/phytoene synthase">
    <location>
        <begin position="1"/>
        <end position="583"/>
    </location>
</feature>
<feature type="transmembrane region" description="Helical" evidence="2">
    <location>
        <begin position="3"/>
        <end position="23"/>
    </location>
</feature>
<feature type="transmembrane region" description="Helical" evidence="2">
    <location>
        <begin position="35"/>
        <end position="55"/>
    </location>
</feature>
<feature type="transmembrane region" description="Helical" evidence="2">
    <location>
        <begin position="75"/>
        <end position="97"/>
    </location>
</feature>
<feature type="transmembrane region" description="Helical" evidence="2">
    <location>
        <begin position="120"/>
        <end position="140"/>
    </location>
</feature>
<feature type="transmembrane region" description="Helical" evidence="2">
    <location>
        <begin position="151"/>
        <end position="171"/>
    </location>
</feature>
<feature type="transmembrane region" description="Helical" evidence="2">
    <location>
        <begin position="173"/>
        <end position="193"/>
    </location>
</feature>
<feature type="transmembrane region" description="Helical" evidence="2">
    <location>
        <begin position="221"/>
        <end position="241"/>
    </location>
</feature>
<feature type="region of interest" description="Lycopene beta-cyclase" evidence="1">
    <location>
        <begin position="1"/>
        <end position="243"/>
    </location>
</feature>
<feature type="region of interest" description="Phytoene synthase" evidence="1">
    <location>
        <begin position="250"/>
        <end position="583"/>
    </location>
</feature>
<protein>
    <recommendedName>
        <fullName evidence="1">Bifunctional lycopene cyclase/phytoene synthase</fullName>
    </recommendedName>
    <domain>
        <recommendedName>
            <fullName evidence="1">Lycopene beta-cyclase</fullName>
            <ecNumber evidence="1">5.5.1.19</ecNumber>
        </recommendedName>
        <alternativeName>
            <fullName evidence="1">Lycopene cyclase</fullName>
        </alternativeName>
    </domain>
    <domain>
        <recommendedName>
            <fullName evidence="1">Phytoene synthase</fullName>
            <ecNumber evidence="1">2.5.1.32</ecNumber>
        </recommendedName>
    </domain>
</protein>
<name>LCPS_PYRTR</name>
<sequence>MGFDYALVHLKYTIPPAVLLTWLYRPFFTKLDVYKVGYLVSIAVASTIPWDSYLIRTGIWSYPTHVIIGPKLCDIPLEEVFFFIIQTYNTSLLYLLLSRPTFQPVYLNTERGAARRQWRYMRLAGQVFFLALIAWGWRCIRHGGLGTYTGLILVWAGPFLLMLWSLAYQFILALPVTNTALPIFLPTLYLWVVDTLALRRGTWVISTGTKYGLHLWDGLEIEEALFFLATNALIVFGQLAFDNALAVLYTFPHLFTGPSLLPSPVLLMRALLTPCSKYHDARIKGLDEAVNRLKRKSRSFYLASATFPGPLRADLLLLYSFCRVADDLVDNASDADEARAWIAKMRKFLNNVYSDKLPQSVVHSQICDDFPPSTQSALLQLPATKLSPQPLEDLLHGFEMDLAFQQGPIIRTMEDLRVYSERVAGTVAQMCIQLIFYWYPSTLDTEEKNVIVAAGNSMGVALQYVNIARDIEVDAQIGRVYLPLNWLSEAGLSYDDVLKKPNQAQIQTLRKHLLNHAFSVYEKAKDSIERLPIEARGPIRVAVESYMEIGRILRSEQYQVKAGRATVPKSRRIMVAWRTLNSK</sequence>
<dbReference type="EC" id="5.5.1.19" evidence="1"/>
<dbReference type="EC" id="2.5.1.32" evidence="1"/>
<dbReference type="EMBL" id="DS231621">
    <property type="protein sequence ID" value="EDU50285.1"/>
    <property type="molecule type" value="Genomic_DNA"/>
</dbReference>
<dbReference type="RefSeq" id="XP_001937698.1">
    <property type="nucleotide sequence ID" value="XM_001937663.1"/>
</dbReference>
<dbReference type="SMR" id="B2WAQ3"/>
<dbReference type="STRING" id="426418.B2WAQ3"/>
<dbReference type="EnsemblFungi" id="EDU50285">
    <property type="protein sequence ID" value="EDU50285"/>
    <property type="gene ID" value="PTRG_07366"/>
</dbReference>
<dbReference type="GeneID" id="6345639"/>
<dbReference type="KEGG" id="ptrr:6345639"/>
<dbReference type="eggNOG" id="KOG1459">
    <property type="taxonomic scope" value="Eukaryota"/>
</dbReference>
<dbReference type="HOGENOM" id="CLU_012965_0_0_1"/>
<dbReference type="InParanoid" id="B2WAQ3"/>
<dbReference type="OMA" id="WACPFLL"/>
<dbReference type="OrthoDB" id="3659at28556"/>
<dbReference type="UniPathway" id="UPA00799">
    <property type="reaction ID" value="UER00773"/>
</dbReference>
<dbReference type="UniPathway" id="UPA00802"/>
<dbReference type="Proteomes" id="UP000001471">
    <property type="component" value="Unassembled WGS sequence"/>
</dbReference>
<dbReference type="GO" id="GO:0016020">
    <property type="term" value="C:membrane"/>
    <property type="evidence" value="ECO:0007669"/>
    <property type="project" value="UniProtKB-SubCell"/>
</dbReference>
<dbReference type="GO" id="GO:0004311">
    <property type="term" value="F:geranylgeranyl diphosphate synthase activity"/>
    <property type="evidence" value="ECO:0007669"/>
    <property type="project" value="InterPro"/>
</dbReference>
<dbReference type="GO" id="GO:0016872">
    <property type="term" value="F:intramolecular lyase activity"/>
    <property type="evidence" value="ECO:0007669"/>
    <property type="project" value="InterPro"/>
</dbReference>
<dbReference type="GO" id="GO:0045436">
    <property type="term" value="F:lycopene beta cyclase activity"/>
    <property type="evidence" value="ECO:0007669"/>
    <property type="project" value="RHEA"/>
</dbReference>
<dbReference type="GO" id="GO:0051996">
    <property type="term" value="F:squalene synthase [NAD(P)H] activity"/>
    <property type="evidence" value="ECO:0007669"/>
    <property type="project" value="InterPro"/>
</dbReference>
<dbReference type="GO" id="GO:0016117">
    <property type="term" value="P:carotenoid biosynthetic process"/>
    <property type="evidence" value="ECO:0007669"/>
    <property type="project" value="UniProtKB-KW"/>
</dbReference>
<dbReference type="CDD" id="cd00683">
    <property type="entry name" value="Trans_IPPS_HH"/>
    <property type="match status" value="1"/>
</dbReference>
<dbReference type="Gene3D" id="1.10.600.10">
    <property type="entry name" value="Farnesyl Diphosphate Synthase"/>
    <property type="match status" value="1"/>
</dbReference>
<dbReference type="InterPro" id="IPR008949">
    <property type="entry name" value="Isoprenoid_synthase_dom_sf"/>
</dbReference>
<dbReference type="InterPro" id="IPR017825">
    <property type="entry name" value="Lycopene_cyclase_dom"/>
</dbReference>
<dbReference type="InterPro" id="IPR002060">
    <property type="entry name" value="Squ/phyt_synthse"/>
</dbReference>
<dbReference type="InterPro" id="IPR019845">
    <property type="entry name" value="Squalene/phytoene_synthase_CS"/>
</dbReference>
<dbReference type="InterPro" id="IPR044843">
    <property type="entry name" value="Trans_IPPS_bact-type"/>
</dbReference>
<dbReference type="InterPro" id="IPR033904">
    <property type="entry name" value="Trans_IPPS_HH"/>
</dbReference>
<dbReference type="NCBIfam" id="TIGR03462">
    <property type="entry name" value="CarR_dom_SF"/>
    <property type="match status" value="2"/>
</dbReference>
<dbReference type="PANTHER" id="PTHR31480">
    <property type="entry name" value="BIFUNCTIONAL LYCOPENE CYCLASE/PHYTOENE SYNTHASE"/>
    <property type="match status" value="1"/>
</dbReference>
<dbReference type="Pfam" id="PF00494">
    <property type="entry name" value="SQS_PSY"/>
    <property type="match status" value="1"/>
</dbReference>
<dbReference type="SFLD" id="SFLDG01212">
    <property type="entry name" value="Phytoene_synthase_like"/>
    <property type="match status" value="1"/>
</dbReference>
<dbReference type="SFLD" id="SFLDG01018">
    <property type="entry name" value="Squalene/Phytoene_Synthase_Lik"/>
    <property type="match status" value="1"/>
</dbReference>
<dbReference type="SUPFAM" id="SSF48576">
    <property type="entry name" value="Terpenoid synthases"/>
    <property type="match status" value="1"/>
</dbReference>
<dbReference type="PROSITE" id="PS01045">
    <property type="entry name" value="SQUALEN_PHYTOEN_SYN_2"/>
    <property type="match status" value="1"/>
</dbReference>
<proteinExistence type="inferred from homology"/>
<keyword id="KW-0125">Carotenoid biosynthesis</keyword>
<keyword id="KW-0413">Isomerase</keyword>
<keyword id="KW-0472">Membrane</keyword>
<keyword id="KW-0511">Multifunctional enzyme</keyword>
<keyword id="KW-1185">Reference proteome</keyword>
<keyword id="KW-0808">Transferase</keyword>
<keyword id="KW-0812">Transmembrane</keyword>
<keyword id="KW-1133">Transmembrane helix</keyword>
<accession>B2WAQ3</accession>
<organism>
    <name type="scientific">Pyrenophora tritici-repentis (strain Pt-1C-BFP)</name>
    <name type="common">Wheat tan spot fungus</name>
    <name type="synonym">Drechslera tritici-repentis</name>
    <dbReference type="NCBI Taxonomy" id="426418"/>
    <lineage>
        <taxon>Eukaryota</taxon>
        <taxon>Fungi</taxon>
        <taxon>Dikarya</taxon>
        <taxon>Ascomycota</taxon>
        <taxon>Pezizomycotina</taxon>
        <taxon>Dothideomycetes</taxon>
        <taxon>Pleosporomycetidae</taxon>
        <taxon>Pleosporales</taxon>
        <taxon>Pleosporineae</taxon>
        <taxon>Pleosporaceae</taxon>
        <taxon>Pyrenophora</taxon>
    </lineage>
</organism>
<comment type="function">
    <text evidence="1">Bifunctional enzyme that catalyzes the reactions from geranylgeranyl diphosphate to phytoene (phytoene synthase) and lycopene to beta-carotene via the intermediate gamma-carotene (lycopene cyclase).</text>
</comment>
<comment type="catalytic activity">
    <reaction evidence="1">
        <text>all-trans-lycopene = gamma-carotene</text>
        <dbReference type="Rhea" id="RHEA:32219"/>
        <dbReference type="ChEBI" id="CHEBI:15948"/>
        <dbReference type="ChEBI" id="CHEBI:27740"/>
        <dbReference type="EC" id="5.5.1.19"/>
    </reaction>
</comment>
<comment type="catalytic activity">
    <reaction evidence="1">
        <text>gamma-carotene = all-trans-beta-carotene</text>
        <dbReference type="Rhea" id="RHEA:32239"/>
        <dbReference type="ChEBI" id="CHEBI:17579"/>
        <dbReference type="ChEBI" id="CHEBI:27740"/>
        <dbReference type="EC" id="5.5.1.19"/>
    </reaction>
</comment>
<comment type="catalytic activity">
    <reaction evidence="1">
        <text>2 (2E,6E,10E)-geranylgeranyl diphosphate = 15-cis-phytoene + 2 diphosphate</text>
        <dbReference type="Rhea" id="RHEA:34475"/>
        <dbReference type="ChEBI" id="CHEBI:27787"/>
        <dbReference type="ChEBI" id="CHEBI:33019"/>
        <dbReference type="ChEBI" id="CHEBI:58756"/>
        <dbReference type="EC" id="2.5.1.32"/>
    </reaction>
</comment>
<comment type="pathway">
    <text evidence="1">Carotenoid biosynthesis; beta-carotene biosynthesis.</text>
</comment>
<comment type="pathway">
    <text evidence="1">Carotenoid biosynthesis; phytoene biosynthesis; all-trans-phytoene from geranylgeranyl diphosphate: step 1/1.</text>
</comment>
<comment type="subcellular location">
    <subcellularLocation>
        <location evidence="3">Membrane</location>
        <topology evidence="3">Multi-pass membrane protein</topology>
    </subcellularLocation>
</comment>
<comment type="similarity">
    <text evidence="3">In the N-terminal section; belongs to the lycopene beta-cyclase family.</text>
</comment>
<comment type="similarity">
    <text evidence="3">In the C-terminal section; belongs to the phytoene/squalene synthase family.</text>
</comment>
<gene>
    <name type="ORF">PTRG_07366</name>
</gene>
<evidence type="ECO:0000250" key="1">
    <source>
        <dbReference type="UniProtKB" id="P37295"/>
    </source>
</evidence>
<evidence type="ECO:0000255" key="2"/>
<evidence type="ECO:0000305" key="3"/>